<protein>
    <recommendedName>
        <fullName evidence="1">Small ribosomal subunit protein bS6</fullName>
    </recommendedName>
    <alternativeName>
        <fullName evidence="2">30S ribosomal protein S6</fullName>
    </alternativeName>
</protein>
<keyword id="KW-1185">Reference proteome</keyword>
<keyword id="KW-0687">Ribonucleoprotein</keyword>
<keyword id="KW-0689">Ribosomal protein</keyword>
<keyword id="KW-0694">RNA-binding</keyword>
<keyword id="KW-0699">rRNA-binding</keyword>
<name>RS6_CLOK5</name>
<gene>
    <name evidence="1" type="primary">rpsF</name>
    <name type="ordered locus">CKL_3910</name>
</gene>
<evidence type="ECO:0000255" key="1">
    <source>
        <dbReference type="HAMAP-Rule" id="MF_00360"/>
    </source>
</evidence>
<evidence type="ECO:0000305" key="2"/>
<organism>
    <name type="scientific">Clostridium kluyveri (strain ATCC 8527 / DSM 555 / NBRC 12016 / NCIMB 10680 / K1)</name>
    <dbReference type="NCBI Taxonomy" id="431943"/>
    <lineage>
        <taxon>Bacteria</taxon>
        <taxon>Bacillati</taxon>
        <taxon>Bacillota</taxon>
        <taxon>Clostridia</taxon>
        <taxon>Eubacteriales</taxon>
        <taxon>Clostridiaceae</taxon>
        <taxon>Clostridium</taxon>
    </lineage>
</organism>
<proteinExistence type="inferred from homology"/>
<accession>A5N440</accession>
<comment type="function">
    <text evidence="1">Binds together with bS18 to 16S ribosomal RNA.</text>
</comment>
<comment type="similarity">
    <text evidence="1">Belongs to the bacterial ribosomal protein bS6 family.</text>
</comment>
<feature type="chain" id="PRO_1000079439" description="Small ribosomal subunit protein bS6">
    <location>
        <begin position="1"/>
        <end position="95"/>
    </location>
</feature>
<sequence length="95" mass="10959">MGKYETIFILHPSLDEEGYKANVEKFKGVIENGGGVIENVDIWGKRKLAYEIKKVNEGYYTLITFNADPTLPKELDRVFRITDTVVRHIIVKDEK</sequence>
<reference key="1">
    <citation type="journal article" date="2008" name="Proc. Natl. Acad. Sci. U.S.A.">
        <title>The genome of Clostridium kluyveri, a strict anaerobe with unique metabolic features.</title>
        <authorList>
            <person name="Seedorf H."/>
            <person name="Fricke W.F."/>
            <person name="Veith B."/>
            <person name="Brueggemann H."/>
            <person name="Liesegang H."/>
            <person name="Strittmatter A."/>
            <person name="Miethke M."/>
            <person name="Buckel W."/>
            <person name="Hinderberger J."/>
            <person name="Li F."/>
            <person name="Hagemeier C."/>
            <person name="Thauer R.K."/>
            <person name="Gottschalk G."/>
        </authorList>
    </citation>
    <scope>NUCLEOTIDE SEQUENCE [LARGE SCALE GENOMIC DNA]</scope>
    <source>
        <strain>ATCC 8527 / DSM 555 / NBRC 12016 / NCIMB 10680 / K1</strain>
    </source>
</reference>
<dbReference type="EMBL" id="CP000673">
    <property type="protein sequence ID" value="EDK35886.1"/>
    <property type="molecule type" value="Genomic_DNA"/>
</dbReference>
<dbReference type="RefSeq" id="WP_012104223.1">
    <property type="nucleotide sequence ID" value="NC_009706.1"/>
</dbReference>
<dbReference type="SMR" id="A5N440"/>
<dbReference type="STRING" id="431943.CKL_3910"/>
<dbReference type="KEGG" id="ckl:CKL_3910"/>
<dbReference type="eggNOG" id="COG0360">
    <property type="taxonomic scope" value="Bacteria"/>
</dbReference>
<dbReference type="HOGENOM" id="CLU_113441_5_1_9"/>
<dbReference type="Proteomes" id="UP000002411">
    <property type="component" value="Chromosome"/>
</dbReference>
<dbReference type="GO" id="GO:0005737">
    <property type="term" value="C:cytoplasm"/>
    <property type="evidence" value="ECO:0007669"/>
    <property type="project" value="UniProtKB-ARBA"/>
</dbReference>
<dbReference type="GO" id="GO:1990904">
    <property type="term" value="C:ribonucleoprotein complex"/>
    <property type="evidence" value="ECO:0007669"/>
    <property type="project" value="UniProtKB-KW"/>
</dbReference>
<dbReference type="GO" id="GO:0005840">
    <property type="term" value="C:ribosome"/>
    <property type="evidence" value="ECO:0007669"/>
    <property type="project" value="UniProtKB-KW"/>
</dbReference>
<dbReference type="GO" id="GO:0070181">
    <property type="term" value="F:small ribosomal subunit rRNA binding"/>
    <property type="evidence" value="ECO:0007669"/>
    <property type="project" value="TreeGrafter"/>
</dbReference>
<dbReference type="GO" id="GO:0003735">
    <property type="term" value="F:structural constituent of ribosome"/>
    <property type="evidence" value="ECO:0007669"/>
    <property type="project" value="InterPro"/>
</dbReference>
<dbReference type="GO" id="GO:0006412">
    <property type="term" value="P:translation"/>
    <property type="evidence" value="ECO:0007669"/>
    <property type="project" value="UniProtKB-UniRule"/>
</dbReference>
<dbReference type="CDD" id="cd00473">
    <property type="entry name" value="bS6"/>
    <property type="match status" value="1"/>
</dbReference>
<dbReference type="FunFam" id="3.30.70.60:FF:000002">
    <property type="entry name" value="30S ribosomal protein S6"/>
    <property type="match status" value="1"/>
</dbReference>
<dbReference type="Gene3D" id="3.30.70.60">
    <property type="match status" value="1"/>
</dbReference>
<dbReference type="HAMAP" id="MF_00360">
    <property type="entry name" value="Ribosomal_bS6"/>
    <property type="match status" value="1"/>
</dbReference>
<dbReference type="InterPro" id="IPR000529">
    <property type="entry name" value="Ribosomal_bS6"/>
</dbReference>
<dbReference type="InterPro" id="IPR035980">
    <property type="entry name" value="Ribosomal_bS6_sf"/>
</dbReference>
<dbReference type="InterPro" id="IPR020814">
    <property type="entry name" value="Ribosomal_S6_plastid/chlpt"/>
</dbReference>
<dbReference type="InterPro" id="IPR014717">
    <property type="entry name" value="Transl_elong_EF1B/ribsomal_bS6"/>
</dbReference>
<dbReference type="NCBIfam" id="TIGR00166">
    <property type="entry name" value="S6"/>
    <property type="match status" value="1"/>
</dbReference>
<dbReference type="PANTHER" id="PTHR21011">
    <property type="entry name" value="MITOCHONDRIAL 28S RIBOSOMAL PROTEIN S6"/>
    <property type="match status" value="1"/>
</dbReference>
<dbReference type="PANTHER" id="PTHR21011:SF1">
    <property type="entry name" value="SMALL RIBOSOMAL SUBUNIT PROTEIN BS6M"/>
    <property type="match status" value="1"/>
</dbReference>
<dbReference type="Pfam" id="PF01250">
    <property type="entry name" value="Ribosomal_S6"/>
    <property type="match status" value="1"/>
</dbReference>
<dbReference type="SUPFAM" id="SSF54995">
    <property type="entry name" value="Ribosomal protein S6"/>
    <property type="match status" value="1"/>
</dbReference>